<protein>
    <recommendedName>
        <fullName>Probable beta-galactosidase C</fullName>
        <ecNumber>3.2.1.23</ecNumber>
    </recommendedName>
    <alternativeName>
        <fullName>Lactase C</fullName>
    </alternativeName>
</protein>
<gene>
    <name type="primary">lacC</name>
    <name type="ORF">Pc14g01510</name>
</gene>
<accession>B6H5X9</accession>
<sequence>MRLFALLPVLLGLISSHFVSATDNGKTTDVTWDKYSLSVKGERVYVFSGEFHYQRLPVPELWLDVFQKLRANGFNAISIYFFWSFHSASEDTFDFENGAHDVQRVFDYAKQAGLYVIARAGPYCNAETSAGGFALWASNGQMGSTRTSASSYYDRWYPWIQEIGKIIAANQITNGGPVILNQHENELQETIHSADNTVVKYMEQIKAAFSDAGIIVPSTHNEKGMRSMSWSTDYQDVGGAVNIYGLDSYPGGLSCTNPNSGFNLVRTYYQWFQNYSSSQPEYLPEFEGGWFSAWGGSFYDQCSTELSPEFADVYYKNNIGSRVTLHNIYMVMGATSWGQSAAPVVYTSYDYSAPMRETREIRDKLKQTKLIGLFTRVSSGLLQTQMEGNGTGYTSDASIYTWALRNPETHAGFYVLAHSTSSSRAVTTTSLNVNTSAGALTIPNIELAGRQSKIIVTDYQTGDGSSLLYSSAEVLTYATLDVDVIVFYLNIGQKGEFAFKDAPTHLTFKTYGNSKVSSAKSDHGTKYTYCQGDGTTVLKFSHGVLVYLLDKETAWNFFAVPTTSNPRVAPSEQILALGPYLVRTASVSGHTVSLVGDNANATSLEVYTGNSKVTQIKWNGKETPTKKTAYGSLIGSAPGAEHAKLSLPTLKSWKAQDTLPEINPDYDDSRWTVCNKTTSVNSVAPLTLPVLYSGDYGYHAGTKIYRGRFDGVTATGANITVQNGVAAGWAAWLNGVYVGGAIGDPDLAATSAELEFTSSTLRRKDNVLTVVMDYTGHDQANVKPNGSQNPRGILGATLLGGDFTSWRIQGNAGGEANIDPVRGPMNEGGLYGERLGWHLPGYKGSKTATSESPLDGVSGAAGRFYTTTFKLDLDSDLDVPIGLQLGASADAPAVVQIFMNGYQFGHYLPHIGPQTRFPFPPGVINNRGENTLAISLWALTEQGARLSQVDLVAYGAYRTGFNFNHDWSYLQPQWENNRGQYV</sequence>
<keyword id="KW-0119">Carbohydrate metabolism</keyword>
<keyword id="KW-1015">Disulfide bond</keyword>
<keyword id="KW-0325">Glycoprotein</keyword>
<keyword id="KW-0326">Glycosidase</keyword>
<keyword id="KW-0378">Hydrolase</keyword>
<keyword id="KW-0624">Polysaccharide degradation</keyword>
<keyword id="KW-1185">Reference proteome</keyword>
<keyword id="KW-0964">Secreted</keyword>
<keyword id="KW-0732">Signal</keyword>
<evidence type="ECO:0000250" key="1"/>
<evidence type="ECO:0000255" key="2"/>
<evidence type="ECO:0000305" key="3"/>
<name>BGALC_PENRW</name>
<proteinExistence type="inferred from homology"/>
<reference key="1">
    <citation type="journal article" date="2008" name="Nat. Biotechnol.">
        <title>Genome sequencing and analysis of the filamentous fungus Penicillium chrysogenum.</title>
        <authorList>
            <person name="van den Berg M.A."/>
            <person name="Albang R."/>
            <person name="Albermann K."/>
            <person name="Badger J.H."/>
            <person name="Daran J.-M."/>
            <person name="Driessen A.J.M."/>
            <person name="Garcia-Estrada C."/>
            <person name="Fedorova N.D."/>
            <person name="Harris D.M."/>
            <person name="Heijne W.H.M."/>
            <person name="Joardar V.S."/>
            <person name="Kiel J.A.K.W."/>
            <person name="Kovalchuk A."/>
            <person name="Martin J.F."/>
            <person name="Nierman W.C."/>
            <person name="Nijland J.G."/>
            <person name="Pronk J.T."/>
            <person name="Roubos J.A."/>
            <person name="van der Klei I.J."/>
            <person name="van Peij N.N.M.E."/>
            <person name="Veenhuis M."/>
            <person name="von Doehren H."/>
            <person name="Wagner C."/>
            <person name="Wortman J.R."/>
            <person name="Bovenberg R.A.L."/>
        </authorList>
    </citation>
    <scope>NUCLEOTIDE SEQUENCE [LARGE SCALE GENOMIC DNA]</scope>
    <source>
        <strain>ATCC 28089 / DSM 1075 / NRRL 1951 / Wisconsin 54-1255</strain>
    </source>
</reference>
<comment type="function">
    <text evidence="1">Cleaves beta-linked terminal galactosyl residues from gangliosides, glycoproteins, and glycosaminoglycans.</text>
</comment>
<comment type="catalytic activity">
    <reaction>
        <text>Hydrolysis of terminal non-reducing beta-D-galactose residues in beta-D-galactosides.</text>
        <dbReference type="EC" id="3.2.1.23"/>
    </reaction>
</comment>
<comment type="subcellular location">
    <subcellularLocation>
        <location evidence="1">Secreted</location>
    </subcellularLocation>
</comment>
<comment type="similarity">
    <text evidence="3">Belongs to the glycosyl hydrolase 35 family.</text>
</comment>
<dbReference type="EC" id="3.2.1.23"/>
<dbReference type="EMBL" id="AM920429">
    <property type="protein sequence ID" value="CAP74292.1"/>
    <property type="molecule type" value="Genomic_DNA"/>
</dbReference>
<dbReference type="RefSeq" id="XP_002560145.1">
    <property type="nucleotide sequence ID" value="XM_002560099.1"/>
</dbReference>
<dbReference type="SMR" id="B6H5X9"/>
<dbReference type="STRING" id="500485.B6H5X9"/>
<dbReference type="CAZy" id="GH35">
    <property type="family name" value="Glycoside Hydrolase Family 35"/>
</dbReference>
<dbReference type="GlyCosmos" id="B6H5X9">
    <property type="glycosylation" value="7 sites, No reported glycans"/>
</dbReference>
<dbReference type="GeneID" id="8314314"/>
<dbReference type="KEGG" id="pcs:N7525_000151"/>
<dbReference type="VEuPathDB" id="FungiDB:PCH_Pc14g01510"/>
<dbReference type="eggNOG" id="KOG0496">
    <property type="taxonomic scope" value="Eukaryota"/>
</dbReference>
<dbReference type="HOGENOM" id="CLU_005732_2_1_1"/>
<dbReference type="OMA" id="PEFEGGW"/>
<dbReference type="OrthoDB" id="1657402at2759"/>
<dbReference type="BioCyc" id="PCHR:PC14G01510-MONOMER"/>
<dbReference type="Proteomes" id="UP000000724">
    <property type="component" value="Contig Pc00c14"/>
</dbReference>
<dbReference type="GO" id="GO:0005576">
    <property type="term" value="C:extracellular region"/>
    <property type="evidence" value="ECO:0007669"/>
    <property type="project" value="UniProtKB-SubCell"/>
</dbReference>
<dbReference type="GO" id="GO:0004565">
    <property type="term" value="F:beta-galactosidase activity"/>
    <property type="evidence" value="ECO:0007669"/>
    <property type="project" value="UniProtKB-EC"/>
</dbReference>
<dbReference type="GO" id="GO:0000272">
    <property type="term" value="P:polysaccharide catabolic process"/>
    <property type="evidence" value="ECO:0007669"/>
    <property type="project" value="UniProtKB-KW"/>
</dbReference>
<dbReference type="FunFam" id="2.102.20.10:FF:000001">
    <property type="entry name" value="Beta-galactosidase A"/>
    <property type="match status" value="1"/>
</dbReference>
<dbReference type="FunFam" id="2.60.120.260:FF:000065">
    <property type="entry name" value="Beta-galactosidase A"/>
    <property type="match status" value="1"/>
</dbReference>
<dbReference type="FunFam" id="3.20.20.80:FF:000040">
    <property type="entry name" value="Beta-galactosidase A"/>
    <property type="match status" value="1"/>
</dbReference>
<dbReference type="Gene3D" id="2.102.20.10">
    <property type="entry name" value="Beta-galactosidase, domain 2"/>
    <property type="match status" value="1"/>
</dbReference>
<dbReference type="Gene3D" id="2.60.390.10">
    <property type="entry name" value="Beta-galactosidase, domain 3"/>
    <property type="match status" value="1"/>
</dbReference>
<dbReference type="Gene3D" id="2.60.120.260">
    <property type="entry name" value="Galactose-binding domain-like"/>
    <property type="match status" value="2"/>
</dbReference>
<dbReference type="Gene3D" id="3.20.20.80">
    <property type="entry name" value="Glycosidases"/>
    <property type="match status" value="1"/>
</dbReference>
<dbReference type="InterPro" id="IPR018954">
    <property type="entry name" value="Betagal_dom2"/>
</dbReference>
<dbReference type="InterPro" id="IPR037110">
    <property type="entry name" value="Betagal_dom2_sf"/>
</dbReference>
<dbReference type="InterPro" id="IPR025972">
    <property type="entry name" value="BetaGal_dom3"/>
</dbReference>
<dbReference type="InterPro" id="IPR036833">
    <property type="entry name" value="BetaGal_dom3_sf"/>
</dbReference>
<dbReference type="InterPro" id="IPR025300">
    <property type="entry name" value="BetaGal_jelly_roll_dom"/>
</dbReference>
<dbReference type="InterPro" id="IPR008979">
    <property type="entry name" value="Galactose-bd-like_sf"/>
</dbReference>
<dbReference type="InterPro" id="IPR031330">
    <property type="entry name" value="Gly_Hdrlase_35_cat"/>
</dbReference>
<dbReference type="InterPro" id="IPR001944">
    <property type="entry name" value="Glycoside_Hdrlase_35"/>
</dbReference>
<dbReference type="InterPro" id="IPR017853">
    <property type="entry name" value="Glycoside_hydrolase_SF"/>
</dbReference>
<dbReference type="PANTHER" id="PTHR23421">
    <property type="entry name" value="BETA-GALACTOSIDASE RELATED"/>
    <property type="match status" value="1"/>
</dbReference>
<dbReference type="Pfam" id="PF13364">
    <property type="entry name" value="BetaGal_ABD2"/>
    <property type="match status" value="2"/>
</dbReference>
<dbReference type="Pfam" id="PF10435">
    <property type="entry name" value="BetaGal_dom2"/>
    <property type="match status" value="1"/>
</dbReference>
<dbReference type="Pfam" id="PF13363">
    <property type="entry name" value="BetaGal_dom3"/>
    <property type="match status" value="1"/>
</dbReference>
<dbReference type="Pfam" id="PF01301">
    <property type="entry name" value="Glyco_hydro_35"/>
    <property type="match status" value="1"/>
</dbReference>
<dbReference type="PRINTS" id="PR00742">
    <property type="entry name" value="GLHYDRLASE35"/>
</dbReference>
<dbReference type="SMART" id="SM01029">
    <property type="entry name" value="BetaGal_dom2"/>
    <property type="match status" value="1"/>
</dbReference>
<dbReference type="SUPFAM" id="SSF51445">
    <property type="entry name" value="(Trans)glycosidases"/>
    <property type="match status" value="1"/>
</dbReference>
<dbReference type="SUPFAM" id="SSF117100">
    <property type="entry name" value="Beta-galactosidase LacA, domain 3"/>
    <property type="match status" value="1"/>
</dbReference>
<dbReference type="SUPFAM" id="SSF49785">
    <property type="entry name" value="Galactose-binding domain-like"/>
    <property type="match status" value="2"/>
</dbReference>
<dbReference type="SUPFAM" id="SSF51011">
    <property type="entry name" value="Glycosyl hydrolase domain"/>
    <property type="match status" value="1"/>
</dbReference>
<feature type="signal peptide" evidence="2">
    <location>
        <begin position="1"/>
        <end position="21"/>
    </location>
</feature>
<feature type="chain" id="PRO_5000409114" description="Probable beta-galactosidase C">
    <location>
        <begin position="22"/>
        <end position="982"/>
    </location>
</feature>
<feature type="active site" description="Proton donor" evidence="2">
    <location>
        <position position="186"/>
    </location>
</feature>
<feature type="active site" description="Nucleophile" evidence="2">
    <location>
        <position position="285"/>
    </location>
</feature>
<feature type="binding site" evidence="1">
    <location>
        <position position="80"/>
    </location>
    <ligand>
        <name>substrate</name>
    </ligand>
</feature>
<feature type="binding site" evidence="1">
    <location>
        <position position="125"/>
    </location>
    <ligand>
        <name>substrate</name>
    </ligand>
</feature>
<feature type="binding site" evidence="1">
    <location>
        <position position="126"/>
    </location>
    <ligand>
        <name>substrate</name>
    </ligand>
</feature>
<feature type="binding site" evidence="1">
    <location>
        <position position="127"/>
    </location>
    <ligand>
        <name>substrate</name>
    </ligand>
</feature>
<feature type="binding site" evidence="1">
    <location>
        <position position="185"/>
    </location>
    <ligand>
        <name>substrate</name>
    </ligand>
</feature>
<feature type="binding site" evidence="1">
    <location>
        <position position="249"/>
    </location>
    <ligand>
        <name>substrate</name>
    </ligand>
</feature>
<feature type="binding site" evidence="1">
    <location>
        <position position="351"/>
    </location>
    <ligand>
        <name>substrate</name>
    </ligand>
</feature>
<feature type="glycosylation site" description="N-linked (GlcNAc...) asparagine" evidence="2">
    <location>
        <position position="274"/>
    </location>
</feature>
<feature type="glycosylation site" description="N-linked (GlcNAc...) asparagine" evidence="2">
    <location>
        <position position="389"/>
    </location>
</feature>
<feature type="glycosylation site" description="N-linked (GlcNAc...) asparagine" evidence="2">
    <location>
        <position position="434"/>
    </location>
</feature>
<feature type="glycosylation site" description="N-linked (GlcNAc...) asparagine" evidence="2">
    <location>
        <position position="600"/>
    </location>
</feature>
<feature type="glycosylation site" description="N-linked (GlcNAc...) asparagine" evidence="2">
    <location>
        <position position="675"/>
    </location>
</feature>
<feature type="glycosylation site" description="N-linked (GlcNAc...) asparagine" evidence="2">
    <location>
        <position position="718"/>
    </location>
</feature>
<feature type="glycosylation site" description="N-linked (GlcNAc...) asparagine" evidence="2">
    <location>
        <position position="785"/>
    </location>
</feature>
<feature type="disulfide bond" evidence="1">
    <location>
        <begin position="255"/>
        <end position="302"/>
    </location>
</feature>
<organism>
    <name type="scientific">Penicillium rubens (strain ATCC 28089 / DSM 1075 / NRRL 1951 / Wisconsin 54-1255)</name>
    <name type="common">Penicillium chrysogenum</name>
    <dbReference type="NCBI Taxonomy" id="500485"/>
    <lineage>
        <taxon>Eukaryota</taxon>
        <taxon>Fungi</taxon>
        <taxon>Dikarya</taxon>
        <taxon>Ascomycota</taxon>
        <taxon>Pezizomycotina</taxon>
        <taxon>Eurotiomycetes</taxon>
        <taxon>Eurotiomycetidae</taxon>
        <taxon>Eurotiales</taxon>
        <taxon>Aspergillaceae</taxon>
        <taxon>Penicillium</taxon>
        <taxon>Penicillium chrysogenum species complex</taxon>
    </lineage>
</organism>